<name>YCIC_SALPK</name>
<accession>B5BIB3</accession>
<gene>
    <name evidence="1" type="primary">yciC</name>
    <name type="ordered locus">SSPA1062</name>
</gene>
<protein>
    <recommendedName>
        <fullName evidence="1">UPF0259 membrane protein YciC</fullName>
    </recommendedName>
</protein>
<reference key="1">
    <citation type="journal article" date="2009" name="BMC Genomics">
        <title>Pseudogene accumulation in the evolutionary histories of Salmonella enterica serovars Paratyphi A and Typhi.</title>
        <authorList>
            <person name="Holt K.E."/>
            <person name="Thomson N.R."/>
            <person name="Wain J."/>
            <person name="Langridge G.C."/>
            <person name="Hasan R."/>
            <person name="Bhutta Z.A."/>
            <person name="Quail M.A."/>
            <person name="Norbertczak H."/>
            <person name="Walker D."/>
            <person name="Simmonds M."/>
            <person name="White B."/>
            <person name="Bason N."/>
            <person name="Mungall K."/>
            <person name="Dougan G."/>
            <person name="Parkhill J."/>
        </authorList>
    </citation>
    <scope>NUCLEOTIDE SEQUENCE [LARGE SCALE GENOMIC DNA]</scope>
    <source>
        <strain>AKU_12601</strain>
    </source>
</reference>
<proteinExistence type="inferred from homology"/>
<feature type="chain" id="PRO_1000136594" description="UPF0259 membrane protein YciC">
    <location>
        <begin position="1"/>
        <end position="247"/>
    </location>
</feature>
<feature type="transmembrane region" description="Helical" evidence="1">
    <location>
        <begin position="20"/>
        <end position="40"/>
    </location>
</feature>
<feature type="transmembrane region" description="Helical" evidence="1">
    <location>
        <begin position="87"/>
        <end position="107"/>
    </location>
</feature>
<feature type="transmembrane region" description="Helical" evidence="1">
    <location>
        <begin position="118"/>
        <end position="140"/>
    </location>
</feature>
<feature type="transmembrane region" description="Helical" evidence="1">
    <location>
        <begin position="152"/>
        <end position="172"/>
    </location>
</feature>
<feature type="transmembrane region" description="Helical" evidence="1">
    <location>
        <begin position="194"/>
        <end position="214"/>
    </location>
</feature>
<feature type="transmembrane region" description="Helical" evidence="1">
    <location>
        <begin position="219"/>
        <end position="239"/>
    </location>
</feature>
<sequence length="247" mass="26371">MSITAKSVYRDAGNFFRNQFITILLVSLLCAFITVVLGHAFSPSDAQIAQLSEGEHLAGSAGLFELVQNMTPEQQQILLRASAASTFSGLIGNAILAGGIILMIQLVSAGHRVSALRAIGASAPALPKLFILIFLTTLLVQIGIMLIVVPGIIMAIVLALAPVMLVEEKMGVFAAMRSSMRLAWANMRLVAPAVIGWLLAKTLLLLFAPSFAVLTPNVGAVLANTLSNLISAVLLIYLFRLYMLIRQ</sequence>
<keyword id="KW-0997">Cell inner membrane</keyword>
<keyword id="KW-1003">Cell membrane</keyword>
<keyword id="KW-0472">Membrane</keyword>
<keyword id="KW-0812">Transmembrane</keyword>
<keyword id="KW-1133">Transmembrane helix</keyword>
<dbReference type="EMBL" id="FM200053">
    <property type="protein sequence ID" value="CAR59216.1"/>
    <property type="molecule type" value="Genomic_DNA"/>
</dbReference>
<dbReference type="RefSeq" id="WP_000028507.1">
    <property type="nucleotide sequence ID" value="NC_011147.1"/>
</dbReference>
<dbReference type="KEGG" id="sek:SSPA1062"/>
<dbReference type="HOGENOM" id="CLU_073287_0_0_6"/>
<dbReference type="Proteomes" id="UP000001869">
    <property type="component" value="Chromosome"/>
</dbReference>
<dbReference type="GO" id="GO:0005886">
    <property type="term" value="C:plasma membrane"/>
    <property type="evidence" value="ECO:0007669"/>
    <property type="project" value="UniProtKB-SubCell"/>
</dbReference>
<dbReference type="HAMAP" id="MF_01067">
    <property type="entry name" value="UPF0259"/>
    <property type="match status" value="1"/>
</dbReference>
<dbReference type="InterPro" id="IPR009627">
    <property type="entry name" value="UPF0259"/>
</dbReference>
<dbReference type="NCBIfam" id="NF002774">
    <property type="entry name" value="PRK02868.1"/>
    <property type="match status" value="1"/>
</dbReference>
<dbReference type="Pfam" id="PF06790">
    <property type="entry name" value="UPF0259"/>
    <property type="match status" value="1"/>
</dbReference>
<organism>
    <name type="scientific">Salmonella paratyphi A (strain AKU_12601)</name>
    <dbReference type="NCBI Taxonomy" id="554290"/>
    <lineage>
        <taxon>Bacteria</taxon>
        <taxon>Pseudomonadati</taxon>
        <taxon>Pseudomonadota</taxon>
        <taxon>Gammaproteobacteria</taxon>
        <taxon>Enterobacterales</taxon>
        <taxon>Enterobacteriaceae</taxon>
        <taxon>Salmonella</taxon>
    </lineage>
</organism>
<evidence type="ECO:0000255" key="1">
    <source>
        <dbReference type="HAMAP-Rule" id="MF_01067"/>
    </source>
</evidence>
<comment type="subcellular location">
    <subcellularLocation>
        <location evidence="1">Cell inner membrane</location>
        <topology evidence="1">Multi-pass membrane protein</topology>
    </subcellularLocation>
</comment>
<comment type="similarity">
    <text evidence="1">Belongs to the UPF0259 family.</text>
</comment>